<reference key="1">
    <citation type="journal article" date="2008" name="Genomics">
        <title>Characterization of ST-4821 complex, a unique Neisseria meningitidis clone.</title>
        <authorList>
            <person name="Peng J."/>
            <person name="Yang L."/>
            <person name="Yang F."/>
            <person name="Yang J."/>
            <person name="Yan Y."/>
            <person name="Nie H."/>
            <person name="Zhang X."/>
            <person name="Xiong Z."/>
            <person name="Jiang Y."/>
            <person name="Cheng F."/>
            <person name="Xu X."/>
            <person name="Chen S."/>
            <person name="Sun L."/>
            <person name="Li W."/>
            <person name="Shen Y."/>
            <person name="Shao Z."/>
            <person name="Liang X."/>
            <person name="Xu J."/>
            <person name="Jin Q."/>
        </authorList>
    </citation>
    <scope>NUCLEOTIDE SEQUENCE [LARGE SCALE GENOMIC DNA]</scope>
    <source>
        <strain>053442</strain>
    </source>
</reference>
<sequence length="464" mass="52421">MTVKTRFAPSPTGYLHIGGVRTALFSWAFARHHKGEFLLRIEDTDLARSTAESVNIILDGMKWVGLDYDNAGNVVYQTRRFDRYKEVIAELLEKGDAYYCYCSKEELEAMREKAEKEGTATYDRRWRPEAGKTLPEIPAGVQPVVRFKTPLDGVTKWTDLVKGEISIPNEALDDLIIARADGTPTYNFCVVVDDYDMGVTHVIRGDDHVNNTPKQINILKAIGATLPEYGHLPMILNEQGKKISKRSGDTVAITDFGAMGILPEAMLNYLARLGWAHGDDEFFTMEQFIEWFDLKDVSPSPSRMDLKKLYWINGEHIKITPNGKLAELVKPRLALRDIHETEKPALEDVLALVKDRAQDLNTLADECLYFYVKQTPTEADVQKHWDDEAAARMLRFAERLEGLEDWNTEAIHDLFKPFCDEEGIKMGKLGMPLRLAVCGTAKTPSVDAVLALIGKEEVLKRIRA</sequence>
<keyword id="KW-0030">Aminoacyl-tRNA synthetase</keyword>
<keyword id="KW-0067">ATP-binding</keyword>
<keyword id="KW-0963">Cytoplasm</keyword>
<keyword id="KW-0436">Ligase</keyword>
<keyword id="KW-0547">Nucleotide-binding</keyword>
<keyword id="KW-0648">Protein biosynthesis</keyword>
<gene>
    <name evidence="1" type="primary">gltX</name>
    <name type="ordered locus">NMCC_0003</name>
</gene>
<comment type="function">
    <text evidence="1">Catalyzes the attachment of glutamate to tRNA(Glu) in a two-step reaction: glutamate is first activated by ATP to form Glu-AMP and then transferred to the acceptor end of tRNA(Glu).</text>
</comment>
<comment type="catalytic activity">
    <reaction evidence="1">
        <text>tRNA(Glu) + L-glutamate + ATP = L-glutamyl-tRNA(Glu) + AMP + diphosphate</text>
        <dbReference type="Rhea" id="RHEA:23540"/>
        <dbReference type="Rhea" id="RHEA-COMP:9663"/>
        <dbReference type="Rhea" id="RHEA-COMP:9680"/>
        <dbReference type="ChEBI" id="CHEBI:29985"/>
        <dbReference type="ChEBI" id="CHEBI:30616"/>
        <dbReference type="ChEBI" id="CHEBI:33019"/>
        <dbReference type="ChEBI" id="CHEBI:78442"/>
        <dbReference type="ChEBI" id="CHEBI:78520"/>
        <dbReference type="ChEBI" id="CHEBI:456215"/>
        <dbReference type="EC" id="6.1.1.17"/>
    </reaction>
</comment>
<comment type="subunit">
    <text evidence="1">Monomer.</text>
</comment>
<comment type="subcellular location">
    <subcellularLocation>
        <location evidence="1">Cytoplasm</location>
    </subcellularLocation>
</comment>
<comment type="similarity">
    <text evidence="1">Belongs to the class-I aminoacyl-tRNA synthetase family. Glutamate--tRNA ligase type 1 subfamily.</text>
</comment>
<evidence type="ECO:0000255" key="1">
    <source>
        <dbReference type="HAMAP-Rule" id="MF_00022"/>
    </source>
</evidence>
<accession>A9LZH6</accession>
<name>SYE_NEIM0</name>
<organism>
    <name type="scientific">Neisseria meningitidis serogroup C (strain 053442)</name>
    <dbReference type="NCBI Taxonomy" id="374833"/>
    <lineage>
        <taxon>Bacteria</taxon>
        <taxon>Pseudomonadati</taxon>
        <taxon>Pseudomonadota</taxon>
        <taxon>Betaproteobacteria</taxon>
        <taxon>Neisseriales</taxon>
        <taxon>Neisseriaceae</taxon>
        <taxon>Neisseria</taxon>
    </lineage>
</organism>
<protein>
    <recommendedName>
        <fullName evidence="1">Glutamate--tRNA ligase</fullName>
        <ecNumber evidence="1">6.1.1.17</ecNumber>
    </recommendedName>
    <alternativeName>
        <fullName evidence="1">Glutamyl-tRNA synthetase</fullName>
        <shortName evidence="1">GluRS</shortName>
    </alternativeName>
</protein>
<proteinExistence type="inferred from homology"/>
<dbReference type="EC" id="6.1.1.17" evidence="1"/>
<dbReference type="EMBL" id="CP000381">
    <property type="protein sequence ID" value="ABX72234.1"/>
    <property type="molecule type" value="Genomic_DNA"/>
</dbReference>
<dbReference type="RefSeq" id="WP_002240157.1">
    <property type="nucleotide sequence ID" value="NC_010120.1"/>
</dbReference>
<dbReference type="SMR" id="A9LZH6"/>
<dbReference type="KEGG" id="nmn:NMCC_0003"/>
<dbReference type="HOGENOM" id="CLU_015768_6_3_4"/>
<dbReference type="Proteomes" id="UP000001177">
    <property type="component" value="Chromosome"/>
</dbReference>
<dbReference type="GO" id="GO:0005829">
    <property type="term" value="C:cytosol"/>
    <property type="evidence" value="ECO:0007669"/>
    <property type="project" value="TreeGrafter"/>
</dbReference>
<dbReference type="GO" id="GO:0005524">
    <property type="term" value="F:ATP binding"/>
    <property type="evidence" value="ECO:0007669"/>
    <property type="project" value="UniProtKB-UniRule"/>
</dbReference>
<dbReference type="GO" id="GO:0004818">
    <property type="term" value="F:glutamate-tRNA ligase activity"/>
    <property type="evidence" value="ECO:0007669"/>
    <property type="project" value="UniProtKB-UniRule"/>
</dbReference>
<dbReference type="GO" id="GO:0000049">
    <property type="term" value="F:tRNA binding"/>
    <property type="evidence" value="ECO:0007669"/>
    <property type="project" value="InterPro"/>
</dbReference>
<dbReference type="GO" id="GO:0008270">
    <property type="term" value="F:zinc ion binding"/>
    <property type="evidence" value="ECO:0007669"/>
    <property type="project" value="InterPro"/>
</dbReference>
<dbReference type="GO" id="GO:0006424">
    <property type="term" value="P:glutamyl-tRNA aminoacylation"/>
    <property type="evidence" value="ECO:0007669"/>
    <property type="project" value="UniProtKB-UniRule"/>
</dbReference>
<dbReference type="CDD" id="cd00808">
    <property type="entry name" value="GluRS_core"/>
    <property type="match status" value="1"/>
</dbReference>
<dbReference type="FunFam" id="3.40.50.620:FF:000007">
    <property type="entry name" value="Glutamate--tRNA ligase"/>
    <property type="match status" value="1"/>
</dbReference>
<dbReference type="Gene3D" id="1.10.10.350">
    <property type="match status" value="1"/>
</dbReference>
<dbReference type="Gene3D" id="3.40.50.620">
    <property type="entry name" value="HUPs"/>
    <property type="match status" value="1"/>
</dbReference>
<dbReference type="HAMAP" id="MF_00022">
    <property type="entry name" value="Glu_tRNA_synth_type1"/>
    <property type="match status" value="1"/>
</dbReference>
<dbReference type="InterPro" id="IPR045462">
    <property type="entry name" value="aa-tRNA-synth_I_cd-bd"/>
</dbReference>
<dbReference type="InterPro" id="IPR020751">
    <property type="entry name" value="aa-tRNA-synth_I_codon-bd_sub2"/>
</dbReference>
<dbReference type="InterPro" id="IPR001412">
    <property type="entry name" value="aa-tRNA-synth_I_CS"/>
</dbReference>
<dbReference type="InterPro" id="IPR008925">
    <property type="entry name" value="aa_tRNA-synth_I_cd-bd_sf"/>
</dbReference>
<dbReference type="InterPro" id="IPR004527">
    <property type="entry name" value="Glu-tRNA-ligase_bac/mito"/>
</dbReference>
<dbReference type="InterPro" id="IPR000924">
    <property type="entry name" value="Glu/Gln-tRNA-synth"/>
</dbReference>
<dbReference type="InterPro" id="IPR020058">
    <property type="entry name" value="Glu/Gln-tRNA-synth_Ib_cat-dom"/>
</dbReference>
<dbReference type="InterPro" id="IPR049940">
    <property type="entry name" value="GluQ/Sye"/>
</dbReference>
<dbReference type="InterPro" id="IPR033910">
    <property type="entry name" value="GluRS_core"/>
</dbReference>
<dbReference type="InterPro" id="IPR014729">
    <property type="entry name" value="Rossmann-like_a/b/a_fold"/>
</dbReference>
<dbReference type="NCBIfam" id="TIGR00464">
    <property type="entry name" value="gltX_bact"/>
    <property type="match status" value="1"/>
</dbReference>
<dbReference type="PANTHER" id="PTHR43311">
    <property type="entry name" value="GLUTAMATE--TRNA LIGASE"/>
    <property type="match status" value="1"/>
</dbReference>
<dbReference type="PANTHER" id="PTHR43311:SF2">
    <property type="entry name" value="GLUTAMATE--TRNA LIGASE, MITOCHONDRIAL-RELATED"/>
    <property type="match status" value="1"/>
</dbReference>
<dbReference type="Pfam" id="PF19269">
    <property type="entry name" value="Anticodon_2"/>
    <property type="match status" value="1"/>
</dbReference>
<dbReference type="Pfam" id="PF00749">
    <property type="entry name" value="tRNA-synt_1c"/>
    <property type="match status" value="1"/>
</dbReference>
<dbReference type="PRINTS" id="PR00987">
    <property type="entry name" value="TRNASYNTHGLU"/>
</dbReference>
<dbReference type="SUPFAM" id="SSF48163">
    <property type="entry name" value="An anticodon-binding domain of class I aminoacyl-tRNA synthetases"/>
    <property type="match status" value="1"/>
</dbReference>
<dbReference type="SUPFAM" id="SSF52374">
    <property type="entry name" value="Nucleotidylyl transferase"/>
    <property type="match status" value="1"/>
</dbReference>
<dbReference type="PROSITE" id="PS00178">
    <property type="entry name" value="AA_TRNA_LIGASE_I"/>
    <property type="match status" value="1"/>
</dbReference>
<feature type="chain" id="PRO_1000074326" description="Glutamate--tRNA ligase">
    <location>
        <begin position="1"/>
        <end position="464"/>
    </location>
</feature>
<feature type="short sequence motif" description="'HIGH' region" evidence="1">
    <location>
        <begin position="9"/>
        <end position="19"/>
    </location>
</feature>
<feature type="short sequence motif" description="'KMSKS' region" evidence="1">
    <location>
        <begin position="242"/>
        <end position="246"/>
    </location>
</feature>
<feature type="binding site" evidence="1">
    <location>
        <position position="245"/>
    </location>
    <ligand>
        <name>ATP</name>
        <dbReference type="ChEBI" id="CHEBI:30616"/>
    </ligand>
</feature>